<reference key="1">
    <citation type="journal article" date="2004" name="Proc. Natl. Acad. Sci. U.S.A.">
        <title>Complete genomes of two clinical Staphylococcus aureus strains: evidence for the rapid evolution of virulence and drug resistance.</title>
        <authorList>
            <person name="Holden M.T.G."/>
            <person name="Feil E.J."/>
            <person name="Lindsay J.A."/>
            <person name="Peacock S.J."/>
            <person name="Day N.P.J."/>
            <person name="Enright M.C."/>
            <person name="Foster T.J."/>
            <person name="Moore C.E."/>
            <person name="Hurst L."/>
            <person name="Atkin R."/>
            <person name="Barron A."/>
            <person name="Bason N."/>
            <person name="Bentley S.D."/>
            <person name="Chillingworth C."/>
            <person name="Chillingworth T."/>
            <person name="Churcher C."/>
            <person name="Clark L."/>
            <person name="Corton C."/>
            <person name="Cronin A."/>
            <person name="Doggett J."/>
            <person name="Dowd L."/>
            <person name="Feltwell T."/>
            <person name="Hance Z."/>
            <person name="Harris B."/>
            <person name="Hauser H."/>
            <person name="Holroyd S."/>
            <person name="Jagels K."/>
            <person name="James K.D."/>
            <person name="Lennard N."/>
            <person name="Line A."/>
            <person name="Mayes R."/>
            <person name="Moule S."/>
            <person name="Mungall K."/>
            <person name="Ormond D."/>
            <person name="Quail M.A."/>
            <person name="Rabbinowitsch E."/>
            <person name="Rutherford K.M."/>
            <person name="Sanders M."/>
            <person name="Sharp S."/>
            <person name="Simmonds M."/>
            <person name="Stevens K."/>
            <person name="Whitehead S."/>
            <person name="Barrell B.G."/>
            <person name="Spratt B.G."/>
            <person name="Parkhill J."/>
        </authorList>
    </citation>
    <scope>NUCLEOTIDE SEQUENCE [LARGE SCALE GENOMIC DNA]</scope>
    <source>
        <strain>MSSA476</strain>
    </source>
</reference>
<protein>
    <recommendedName>
        <fullName>Staphopain A</fullName>
        <ecNumber>3.4.22.48</ecNumber>
    </recommendedName>
    <alternativeName>
        <fullName>Staphylococcal cysteine proteinase A</fullName>
    </alternativeName>
    <alternativeName>
        <fullName>Staphylopain A</fullName>
    </alternativeName>
</protein>
<accession>Q6G824</accession>
<comment type="function">
    <text evidence="2">Cysteine protease that plays an important role in the inhibition of host innate immune response. Cleaves host elastins found in connective tissues, pulmonary surfactant protein A in the lungs, and the chemokine receptor CXCR2 on leukocytes. Proteolytic cleavage of surfactant protein A impairs bacterial phagocytosis by neutrophils while CXCR2 degradation blocks neutrophil activation and chemotaxis. Additionally, promotes vascular leakage by activating the plasma kallikerin/kinin system, resulting in hypotension.</text>
</comment>
<comment type="catalytic activity">
    <reaction>
        <text>Broad endopeptidase action on proteins including elastin, but rather limited hydrolysis of small-molecule substrates. Assays are conveniently made with hemoglobin, casein or Z-Phe-Arg-NHMec as substrate.</text>
        <dbReference type="EC" id="3.4.22.48"/>
    </reaction>
</comment>
<comment type="activity regulation">
    <text evidence="1">Prematurely activated/folded staphopain A is inhibited by staphostatin A (ScpB), which is probably required to protect staphylococcal cytoplasmic proteins from degradation by ScpA.</text>
</comment>
<comment type="subunit">
    <text evidence="1">In the cytoplasm, prematurely activated/folded ScpA forms a stable non-covalent complex with ScpB.</text>
</comment>
<comment type="subcellular location">
    <subcellularLocation>
        <location evidence="2">Secreted</location>
    </subcellularLocation>
</comment>
<comment type="PTM">
    <text evidence="1">Cleavage leads to the activation of ScpA probably by an auto-catalytic manner.</text>
</comment>
<comment type="miscellaneous">
    <text evidence="1">The catalytic maturation of ScpA appears to reside outside the cascade of activation started by the metalloprotease aureolysin (aur).</text>
</comment>
<comment type="similarity">
    <text evidence="5">Belongs to the peptidase C47 family.</text>
</comment>
<organism>
    <name type="scientific">Staphylococcus aureus (strain MSSA476)</name>
    <dbReference type="NCBI Taxonomy" id="282459"/>
    <lineage>
        <taxon>Bacteria</taxon>
        <taxon>Bacillati</taxon>
        <taxon>Bacillota</taxon>
        <taxon>Bacilli</taxon>
        <taxon>Bacillales</taxon>
        <taxon>Staphylococcaceae</taxon>
        <taxon>Staphylococcus</taxon>
    </lineage>
</organism>
<sequence length="388" mass="44142">MKRNFPKLIALSLILSLSVTPIANAESNSNIKAKDKKHVQVNVEDKSIPTEVRNLAQKDYLSYVTSLDKIYNKEKASYTLGEPFKIYKFNKKSDGNYYFPVLNTEGNIDYIVTISPKVTKYSSSSSKYTINVSPFLSKVLNQYKDQQITILTNSKGYYVVTQNHKAKLVLKTPRLEDKKLKKTESIPTGNNVTQLKQKASVTMPTSQFKSNNYTYNEQYVNKLENFKIRETQGNNGWCAGYTMSALLNATYNTNKYHAEAVMRFLHPNLQGQRFQFTGLTPREMIYFGQTQGRSPQLLNRMTTYNEVDNLTKNNKGIAVLGSRVESRNGMHAGHAMAVVGNAKLDNGQEVIIIWNPWDNGFMTQDAKNNVIPVSNGDHYQWYSSIYGY</sequence>
<evidence type="ECO:0000250" key="1"/>
<evidence type="ECO:0000250" key="2">
    <source>
        <dbReference type="UniProtKB" id="P81297"/>
    </source>
</evidence>
<evidence type="ECO:0000255" key="3"/>
<evidence type="ECO:0000255" key="4">
    <source>
        <dbReference type="PROSITE-ProRule" id="PRU10089"/>
    </source>
</evidence>
<evidence type="ECO:0000305" key="5"/>
<feature type="signal peptide" evidence="3">
    <location>
        <begin position="1"/>
        <end position="25"/>
    </location>
</feature>
<feature type="propeptide" id="PRO_0000026555" evidence="1">
    <location>
        <begin position="26"/>
        <end position="214"/>
    </location>
</feature>
<feature type="chain" id="PRO_0000026556" description="Staphopain A">
    <location>
        <begin position="215"/>
        <end position="388"/>
    </location>
</feature>
<feature type="active site" evidence="4">
    <location>
        <position position="238"/>
    </location>
</feature>
<feature type="active site" evidence="4">
    <location>
        <position position="334"/>
    </location>
</feature>
<feature type="active site" evidence="4">
    <location>
        <position position="355"/>
    </location>
</feature>
<feature type="site" description="Cleavage" evidence="1">
    <location>
        <begin position="214"/>
        <end position="215"/>
    </location>
</feature>
<dbReference type="EC" id="3.4.22.48"/>
<dbReference type="EMBL" id="BX571857">
    <property type="protein sequence ID" value="CAG43637.1"/>
    <property type="molecule type" value="Genomic_DNA"/>
</dbReference>
<dbReference type="RefSeq" id="WP_000827761.1">
    <property type="nucleotide sequence ID" value="NC_002953.3"/>
</dbReference>
<dbReference type="SMR" id="Q6G824"/>
<dbReference type="MEROPS" id="C47.001"/>
<dbReference type="KEGG" id="sas:SAS1832"/>
<dbReference type="HOGENOM" id="CLU_069043_0_0_9"/>
<dbReference type="PRO" id="PR:Q6G824"/>
<dbReference type="GO" id="GO:0005576">
    <property type="term" value="C:extracellular region"/>
    <property type="evidence" value="ECO:0007669"/>
    <property type="project" value="UniProtKB-SubCell"/>
</dbReference>
<dbReference type="GO" id="GO:0008234">
    <property type="term" value="F:cysteine-type peptidase activity"/>
    <property type="evidence" value="ECO:0007669"/>
    <property type="project" value="UniProtKB-KW"/>
</dbReference>
<dbReference type="GO" id="GO:0006508">
    <property type="term" value="P:proteolysis"/>
    <property type="evidence" value="ECO:0007669"/>
    <property type="project" value="UniProtKB-KW"/>
</dbReference>
<dbReference type="Gene3D" id="3.90.70.10">
    <property type="entry name" value="Cysteine proteinases"/>
    <property type="match status" value="1"/>
</dbReference>
<dbReference type="Gene3D" id="3.10.500.10">
    <property type="entry name" value="Staphopain proregion domain"/>
    <property type="match status" value="1"/>
</dbReference>
<dbReference type="InterPro" id="IPR046350">
    <property type="entry name" value="Cystatin_sf"/>
</dbReference>
<dbReference type="InterPro" id="IPR038765">
    <property type="entry name" value="Papain-like_cys_pep_sf"/>
</dbReference>
<dbReference type="InterPro" id="IPR025660">
    <property type="entry name" value="Pept_his_AS"/>
</dbReference>
<dbReference type="InterPro" id="IPR008750">
    <property type="entry name" value="Peptidase_C47"/>
</dbReference>
<dbReference type="InterPro" id="IPR028076">
    <property type="entry name" value="Staphopain_pro"/>
</dbReference>
<dbReference type="InterPro" id="IPR037155">
    <property type="entry name" value="Staphopain_pro_sf"/>
</dbReference>
<dbReference type="Pfam" id="PF05543">
    <property type="entry name" value="Peptidase_C47"/>
    <property type="match status" value="1"/>
</dbReference>
<dbReference type="Pfam" id="PF14731">
    <property type="entry name" value="Staphopain_pro"/>
    <property type="match status" value="1"/>
</dbReference>
<dbReference type="SUPFAM" id="SSF54403">
    <property type="entry name" value="Cystatin/monellin"/>
    <property type="match status" value="1"/>
</dbReference>
<dbReference type="SUPFAM" id="SSF54001">
    <property type="entry name" value="Cysteine proteinases"/>
    <property type="match status" value="1"/>
</dbReference>
<dbReference type="PROSITE" id="PS00639">
    <property type="entry name" value="THIOL_PROTEASE_HIS"/>
    <property type="match status" value="1"/>
</dbReference>
<name>SSPP_STAAS</name>
<proteinExistence type="inferred from homology"/>
<gene>
    <name type="primary">sspP</name>
    <name type="synonym">scpA</name>
    <name type="ordered locus">SAS1832</name>
</gene>
<keyword id="KW-0378">Hydrolase</keyword>
<keyword id="KW-0645">Protease</keyword>
<keyword id="KW-0964">Secreted</keyword>
<keyword id="KW-0732">Signal</keyword>
<keyword id="KW-0788">Thiol protease</keyword>
<keyword id="KW-0843">Virulence</keyword>
<keyword id="KW-0865">Zymogen</keyword>